<keyword id="KW-0002">3D-structure</keyword>
<keyword id="KW-0045">Antibiotic biosynthesis</keyword>
<keyword id="KW-0460">Magnesium</keyword>
<keyword id="KW-0479">Metal-binding</keyword>
<keyword id="KW-0489">Methyltransferase</keyword>
<keyword id="KW-0949">S-adenosyl-L-methionine</keyword>
<keyword id="KW-0808">Transferase</keyword>
<dbReference type="EC" id="2.1.1.238" evidence="1 3"/>
<dbReference type="EMBL" id="AB089954">
    <property type="protein sequence ID" value="BAC57026.1"/>
    <property type="molecule type" value="Genomic_DNA"/>
</dbReference>
<dbReference type="PDB" id="3SSM">
    <property type="method" value="X-ray"/>
    <property type="resolution" value="2.25 A"/>
    <property type="chains" value="A/B/C/D=1-399"/>
</dbReference>
<dbReference type="PDB" id="3SSN">
    <property type="method" value="X-ray"/>
    <property type="resolution" value="2.39 A"/>
    <property type="chains" value="A/B/C/D=1-399"/>
</dbReference>
<dbReference type="PDB" id="3SSO">
    <property type="method" value="X-ray"/>
    <property type="resolution" value="1.90 A"/>
    <property type="chains" value="A/B/C/D/E/F=1-399"/>
</dbReference>
<dbReference type="PDBsum" id="3SSM"/>
<dbReference type="PDBsum" id="3SSN"/>
<dbReference type="PDBsum" id="3SSO"/>
<dbReference type="SMR" id="Q83WF2"/>
<dbReference type="KEGG" id="ag:BAC57026"/>
<dbReference type="BioCyc" id="MetaCyc:MONOMER-18367"/>
<dbReference type="BRENDA" id="2.1.1.238">
    <property type="organism ID" value="7845"/>
</dbReference>
<dbReference type="UniPathway" id="UPA01019"/>
<dbReference type="EvolutionaryTrace" id="Q83WF2"/>
<dbReference type="GO" id="GO:0000287">
    <property type="term" value="F:magnesium ion binding"/>
    <property type="evidence" value="ECO:0000314"/>
    <property type="project" value="UniProtKB"/>
</dbReference>
<dbReference type="GO" id="GO:0102302">
    <property type="term" value="F:mycinamicin VI 2''-O-methyltransferase activity"/>
    <property type="evidence" value="ECO:0007669"/>
    <property type="project" value="UniProtKB-EC"/>
</dbReference>
<dbReference type="GO" id="GO:0008171">
    <property type="term" value="F:O-methyltransferase activity"/>
    <property type="evidence" value="ECO:0000314"/>
    <property type="project" value="UniProtKB"/>
</dbReference>
<dbReference type="GO" id="GO:0017000">
    <property type="term" value="P:antibiotic biosynthetic process"/>
    <property type="evidence" value="ECO:0000314"/>
    <property type="project" value="UniProtKB"/>
</dbReference>
<dbReference type="GO" id="GO:0032259">
    <property type="term" value="P:methylation"/>
    <property type="evidence" value="ECO:0000314"/>
    <property type="project" value="UniProtKB"/>
</dbReference>
<dbReference type="GO" id="GO:0051289">
    <property type="term" value="P:protein homotetramerization"/>
    <property type="evidence" value="ECO:0000314"/>
    <property type="project" value="UniProtKB"/>
</dbReference>
<dbReference type="FunFam" id="3.30.1050.30:FF:000001">
    <property type="entry name" value="Mycinamicin VI 2''-O-methyltransferase"/>
    <property type="match status" value="1"/>
</dbReference>
<dbReference type="FunFam" id="3.40.50.150:FF:000651">
    <property type="entry name" value="Mycinamicin VI 2''-O-methyltransferase"/>
    <property type="match status" value="1"/>
</dbReference>
<dbReference type="Gene3D" id="3.30.1050.30">
    <property type="match status" value="1"/>
</dbReference>
<dbReference type="Gene3D" id="3.40.50.150">
    <property type="entry name" value="Vaccinia Virus protein VP39"/>
    <property type="match status" value="1"/>
</dbReference>
<dbReference type="InterPro" id="IPR040800">
    <property type="entry name" value="MycE_N"/>
</dbReference>
<dbReference type="InterPro" id="IPR029063">
    <property type="entry name" value="SAM-dependent_MTases_sf"/>
</dbReference>
<dbReference type="Pfam" id="PF17843">
    <property type="entry name" value="MycE_N"/>
    <property type="match status" value="1"/>
</dbReference>
<dbReference type="SUPFAM" id="SSF53335">
    <property type="entry name" value="S-adenosyl-L-methionine-dependent methyltransferases"/>
    <property type="match status" value="1"/>
</dbReference>
<organism>
    <name type="scientific">Micromonospora griseorubida</name>
    <dbReference type="NCBI Taxonomy" id="28040"/>
    <lineage>
        <taxon>Bacteria</taxon>
        <taxon>Bacillati</taxon>
        <taxon>Actinomycetota</taxon>
        <taxon>Actinomycetes</taxon>
        <taxon>Micromonosporales</taxon>
        <taxon>Micromonosporaceae</taxon>
        <taxon>Micromonospora</taxon>
    </lineage>
</organism>
<reference key="1">
    <citation type="journal article" date="2003" name="FEMS Microbiol. Lett.">
        <title>Organization of the biosynthetic gene cluster for the polyketide macrolide mycinamicin in Micromonospora griseorubida.</title>
        <authorList>
            <person name="Anzai Y."/>
            <person name="Saito N."/>
            <person name="Tanaka M."/>
            <person name="Kinoshita K."/>
            <person name="Koyama Y."/>
            <person name="Kato F."/>
        </authorList>
    </citation>
    <scope>NUCLEOTIDE SEQUENCE [GENOMIC DNA]</scope>
</reference>
<reference key="2">
    <citation type="journal article" date="2009" name="ChemBioChem">
        <title>Functional analysis of MycE and MycF, two O-methyltransferases involved in the biosynthesis of mycinamicin macrolide antibiotics.</title>
        <authorList>
            <person name="Li S."/>
            <person name="Anzai Y."/>
            <person name="Kinoshita K."/>
            <person name="Kato F."/>
            <person name="Sherman D.H."/>
        </authorList>
    </citation>
    <scope>FUNCTION</scope>
    <scope>CATALYTIC ACTIVITY</scope>
    <scope>PATHWAY</scope>
    <scope>COFACTOR</scope>
    <source>
        <strain>A11725</strain>
    </source>
</reference>
<reference key="3">
    <citation type="journal article" date="2010" name="FEMS Microbiol. Lett.">
        <title>Gene targeting for O-methyltransferase genes, mycE and mycF, on the chromosome of Micromonospora griseorubida producing mycinamicin with a disruption cassette containing the bacteriophage phi C31 attB attachment site.</title>
        <authorList>
            <person name="Tsukada S."/>
            <person name="Anzai Y."/>
            <person name="Li S."/>
            <person name="Kinoshita K."/>
            <person name="Sherman D.H."/>
            <person name="Kato F."/>
        </authorList>
    </citation>
    <scope>DISRUPTION PHENOTYPE</scope>
    <source>
        <strain>A11725</strain>
    </source>
</reference>
<reference key="4">
    <citation type="journal article" date="2011" name="J. Mol. Biol.">
        <title>A new structural form in the SAM/metal-dependent o-methyltransferase family: MycE from the mycinamicin biosynthetic pathway.</title>
        <authorList>
            <person name="Akey D.L."/>
            <person name="Li S."/>
            <person name="Konwerski J.R."/>
            <person name="Confer L.A."/>
            <person name="Bernard S.M."/>
            <person name="Anzai Y."/>
            <person name="Kato F."/>
            <person name="Sherman D.H."/>
            <person name="Smith J.L."/>
        </authorList>
    </citation>
    <scope>X-RAY CRYSTALLOGRAPHY (1.90 ANGSTROMS) IN COMPLEX WITH MAGNESIUM AND S-ADENOSYL-L-HOMOCYSTEINE</scope>
    <scope>FUNCTION</scope>
    <scope>CATALYTIC ACTIVITY</scope>
    <scope>COFACTOR</scope>
    <scope>SUBUNIT</scope>
    <scope>ACTIVE SITES</scope>
    <scope>MUTAGENESIS OF TYR-208; HIS-278 AND ILE-279</scope>
</reference>
<evidence type="ECO:0000269" key="1">
    <source>
    </source>
</evidence>
<evidence type="ECO:0000269" key="2">
    <source>
    </source>
</evidence>
<evidence type="ECO:0000269" key="3">
    <source>
    </source>
</evidence>
<evidence type="ECO:0000305" key="4"/>
<evidence type="ECO:0007829" key="5">
    <source>
        <dbReference type="PDB" id="3SSN"/>
    </source>
</evidence>
<evidence type="ECO:0007829" key="6">
    <source>
        <dbReference type="PDB" id="3SSO"/>
    </source>
</evidence>
<accession>Q83WF2</accession>
<feature type="chain" id="PRO_0000418457" description="Mycinamicin VI 2''-O-methyltransferase">
    <location>
        <begin position="1"/>
        <end position="399"/>
    </location>
</feature>
<feature type="active site" description="Proton acceptor" evidence="3">
    <location>
        <position position="278"/>
    </location>
</feature>
<feature type="binding site" evidence="3">
    <location>
        <position position="173"/>
    </location>
    <ligand>
        <name>S-adenosyl-L-methionine</name>
        <dbReference type="ChEBI" id="CHEBI:59789"/>
    </ligand>
</feature>
<feature type="binding site" evidence="3">
    <location>
        <begin position="202"/>
        <end position="208"/>
    </location>
    <ligand>
        <name>S-adenosyl-L-methionine</name>
        <dbReference type="ChEBI" id="CHEBI:59789"/>
    </ligand>
</feature>
<feature type="binding site" evidence="3">
    <location>
        <position position="217"/>
    </location>
    <ligand>
        <name>S-adenosyl-L-methionine</name>
        <dbReference type="ChEBI" id="CHEBI:59789"/>
    </ligand>
</feature>
<feature type="binding site" evidence="3">
    <location>
        <position position="234"/>
    </location>
    <ligand>
        <name>S-adenosyl-L-methionine</name>
        <dbReference type="ChEBI" id="CHEBI:59789"/>
    </ligand>
</feature>
<feature type="binding site" evidence="3">
    <location>
        <begin position="252"/>
        <end position="253"/>
    </location>
    <ligand>
        <name>S-adenosyl-L-methionine</name>
        <dbReference type="ChEBI" id="CHEBI:59789"/>
    </ligand>
</feature>
<feature type="binding site" evidence="3">
    <location>
        <position position="275"/>
    </location>
    <ligand>
        <name>Mg(2+)</name>
        <dbReference type="ChEBI" id="CHEBI:18420"/>
    </ligand>
</feature>
<feature type="binding site" evidence="3">
    <location>
        <position position="275"/>
    </location>
    <ligand>
        <name>S-adenosyl-L-methionine</name>
        <dbReference type="ChEBI" id="CHEBI:59789"/>
    </ligand>
</feature>
<feature type="binding site" evidence="3">
    <location>
        <position position="303"/>
    </location>
    <ligand>
        <name>Mg(2+)</name>
        <dbReference type="ChEBI" id="CHEBI:18420"/>
    </ligand>
</feature>
<feature type="binding site" evidence="3">
    <location>
        <position position="304"/>
    </location>
    <ligand>
        <name>Mg(2+)</name>
        <dbReference type="ChEBI" id="CHEBI:18420"/>
    </ligand>
</feature>
<feature type="mutagenesis site" description="Decreased catalytic activity." evidence="3">
    <original>Y</original>
    <variation>F</variation>
    <location>
        <position position="208"/>
    </location>
</feature>
<feature type="mutagenesis site" description="Abolishes catalytic activity." evidence="3">
    <original>H</original>
    <variation>A</variation>
    <variation>K</variation>
    <variation>Q</variation>
    <location>
        <position position="278"/>
    </location>
</feature>
<feature type="mutagenesis site" description="Slightly increased catalytic activity." evidence="3">
    <original>I</original>
    <variation>V</variation>
    <location>
        <position position="279"/>
    </location>
</feature>
<feature type="helix" evidence="6">
    <location>
        <begin position="9"/>
        <end position="19"/>
    </location>
</feature>
<feature type="helix" evidence="6">
    <location>
        <begin position="23"/>
        <end position="32"/>
    </location>
</feature>
<feature type="helix" evidence="6">
    <location>
        <begin position="35"/>
        <end position="49"/>
    </location>
</feature>
<feature type="strand" evidence="6">
    <location>
        <begin position="59"/>
        <end position="67"/>
    </location>
</feature>
<feature type="strand" evidence="6">
    <location>
        <begin position="70"/>
        <end position="78"/>
    </location>
</feature>
<feature type="strand" evidence="6">
    <location>
        <begin position="85"/>
        <end position="87"/>
    </location>
</feature>
<feature type="strand" evidence="6">
    <location>
        <begin position="94"/>
        <end position="101"/>
    </location>
</feature>
<feature type="helix" evidence="6">
    <location>
        <begin position="102"/>
        <end position="110"/>
    </location>
</feature>
<feature type="strand" evidence="5">
    <location>
        <begin position="117"/>
        <end position="120"/>
    </location>
</feature>
<feature type="strand" evidence="6">
    <location>
        <begin position="122"/>
        <end position="126"/>
    </location>
</feature>
<feature type="helix" evidence="6">
    <location>
        <begin position="135"/>
        <end position="155"/>
    </location>
</feature>
<feature type="helix" evidence="6">
    <location>
        <begin position="164"/>
        <end position="170"/>
    </location>
</feature>
<feature type="strand" evidence="6">
    <location>
        <begin position="176"/>
        <end position="179"/>
    </location>
</feature>
<feature type="helix" evidence="6">
    <location>
        <begin position="183"/>
        <end position="190"/>
    </location>
</feature>
<feature type="helix" evidence="6">
    <location>
        <begin position="191"/>
        <end position="193"/>
    </location>
</feature>
<feature type="strand" evidence="6">
    <location>
        <begin position="199"/>
        <end position="203"/>
    </location>
</feature>
<feature type="helix" evidence="6">
    <location>
        <begin position="216"/>
        <end position="224"/>
    </location>
</feature>
<feature type="strand" evidence="6">
    <location>
        <begin position="229"/>
        <end position="236"/>
    </location>
</feature>
<feature type="helix" evidence="6">
    <location>
        <begin position="239"/>
        <end position="241"/>
    </location>
</feature>
<feature type="strand" evidence="6">
    <location>
        <begin position="246"/>
        <end position="250"/>
    </location>
</feature>
<feature type="helix" evidence="6">
    <location>
        <begin position="256"/>
        <end position="266"/>
    </location>
</feature>
<feature type="strand" evidence="6">
    <location>
        <begin position="269"/>
        <end position="274"/>
    </location>
</feature>
<feature type="helix" evidence="6">
    <location>
        <begin position="280"/>
        <end position="290"/>
    </location>
</feature>
<feature type="helix" evidence="6">
    <location>
        <begin position="291"/>
        <end position="293"/>
    </location>
</feature>
<feature type="strand" evidence="6">
    <location>
        <begin position="294"/>
        <end position="303"/>
    </location>
</feature>
<feature type="helix" evidence="6">
    <location>
        <begin position="305"/>
        <end position="309"/>
    </location>
</feature>
<feature type="helix" evidence="6">
    <location>
        <begin position="326"/>
        <end position="337"/>
    </location>
</feature>
<feature type="helix" evidence="6">
    <location>
        <begin position="339"/>
        <end position="341"/>
    </location>
</feature>
<feature type="helix" evidence="6">
    <location>
        <begin position="352"/>
        <end position="356"/>
    </location>
</feature>
<feature type="strand" evidence="6">
    <location>
        <begin position="357"/>
        <end position="363"/>
    </location>
</feature>
<feature type="strand" evidence="6">
    <location>
        <begin position="366"/>
        <end position="372"/>
    </location>
</feature>
<feature type="helix" evidence="6">
    <location>
        <begin position="387"/>
        <end position="394"/>
    </location>
</feature>
<feature type="turn" evidence="6">
    <location>
        <begin position="395"/>
        <end position="397"/>
    </location>
</feature>
<protein>
    <recommendedName>
        <fullName evidence="4">Mycinamicin VI 2''-O-methyltransferase</fullName>
        <ecNumber evidence="1 3">2.1.1.238</ecNumber>
    </recommendedName>
    <alternativeName>
        <fullName>Mycinamicin biosynthesis protein E</fullName>
    </alternativeName>
</protein>
<sequence>MTAQTEFDEATVQDVVRLAGGHDSELRELTQKYDPAMISRLLVAEILSRCPPPSNDTPVLVELAIVHGSERFRHFLRVVRDSPIRPVGADEGFVGMLVEYELTELLRELFGVTHERPAGVRGTKLFPYLTDDEEAVEQIGTYLLAAQQGTEAVLAGCGSRKPDLSELSSRYFTPKFGFLHWFTPHYDRHFRDYRNQQVRVLEIGVGGYKHPEWGGGSLRMWKSFFPRGQIYGLDIMDKSHVDELRIRTIQGDQNDAEFLDRIARRYGPFDIVIDDGSHINAHVRTSFAALFPHVRPGGLYVIEDMWTAYWPGFGGQADPQECSGTSLGLLKSLIDAIQHQELPSDPNRSPGYVDRNIVGLHVYHNVAFVEKGRNDEGGIPTWIPRDFESLVQASSGGAT</sequence>
<name>MYCE_MICGR</name>
<gene>
    <name type="primary">mycE</name>
</gene>
<comment type="function">
    <text evidence="1 3">O-methyltransferase that catalyzes the conversion of mycinamicin VI to mycinamicin III in the biosynthesis of mycinamicin, a 16-membered macrolide antibiotic.</text>
</comment>
<comment type="catalytic activity">
    <reaction evidence="1 3">
        <text>mycinamicin VI + S-adenosyl-L-methionine = mycinamicin III + S-adenosyl-L-homocysteine + H(+)</text>
        <dbReference type="Rhea" id="RHEA:31643"/>
        <dbReference type="ChEBI" id="CHEBI:15378"/>
        <dbReference type="ChEBI" id="CHEBI:57856"/>
        <dbReference type="ChEBI" id="CHEBI:59789"/>
        <dbReference type="ChEBI" id="CHEBI:63308"/>
        <dbReference type="ChEBI" id="CHEBI:63311"/>
        <dbReference type="EC" id="2.1.1.238"/>
    </reaction>
</comment>
<comment type="cofactor">
    <cofactor evidence="1 3">
        <name>Mg(2+)</name>
        <dbReference type="ChEBI" id="CHEBI:18420"/>
    </cofactor>
</comment>
<comment type="pathway">
    <text evidence="1">Antibiotic biosynthesis; mycinamicin biosynthesis.</text>
</comment>
<comment type="subunit">
    <text evidence="3">Homotetramer.</text>
</comment>
<comment type="disruption phenotype">
    <text evidence="2">No production of mycinamicin II and accumulation of mycinamicin VI.</text>
</comment>
<comment type="similarity">
    <text evidence="4">Belongs to the methyltransferase OleY/MycE family.</text>
</comment>
<proteinExistence type="evidence at protein level"/>